<sequence length="388" mass="44107">MINYPLASSTWDDLEYKAIQSVLDSKMFTMGEYVKQYETQFAKTFGSKYAVMVSSGSTANLLMIAALFFTKKPRLKKGDEIIVPAVSWSTTYYPLQQYGLRVKFVDIDINTLNIDIESLKEAVTDSTKAILTVNLLGNPNNFDEINKIIGGRDIILLEDNCESMGATFNNKCAGTFGLMGTFSSFYSHHIATMEGGCIVTDDEEIYHILLCIRAHGWTRNLPKKNKVTGVKSDDQFEESFKFVLPGYNVRPLEMSGAIGIEQLKKLPRFISVRRKNAEYFLDKFKDHPYLDVQQETGESSWFGFSFIIKKDSGVIRKQLVENLNSAGIECRPIVTGNFLKNTDVLKYFDYTVHNNVDNAEYLDKNGLFVGNHQIELFDEIDYLREVLK</sequence>
<organism>
    <name type="scientific">Escherichia coli O55:H7 (strain CB9615 / EPEC)</name>
    <dbReference type="NCBI Taxonomy" id="701177"/>
    <lineage>
        <taxon>Bacteria</taxon>
        <taxon>Pseudomonadati</taxon>
        <taxon>Pseudomonadota</taxon>
        <taxon>Gammaproteobacteria</taxon>
        <taxon>Enterobacterales</taxon>
        <taxon>Enterobacteriaceae</taxon>
        <taxon>Escherichia</taxon>
    </lineage>
</organism>
<keyword id="KW-0002">3D-structure</keyword>
<keyword id="KW-1003">Cell membrane</keyword>
<keyword id="KW-0456">Lyase</keyword>
<keyword id="KW-0472">Membrane</keyword>
<keyword id="KW-0663">Pyridoxal phosphate</keyword>
<keyword id="KW-0812">Transmembrane</keyword>
<keyword id="KW-1133">Transmembrane helix</keyword>
<dbReference type="EC" id="4.2.1.168" evidence="3 4"/>
<dbReference type="EMBL" id="CP001846">
    <property type="protein sequence ID" value="ADD57102.1"/>
    <property type="molecule type" value="Genomic_DNA"/>
</dbReference>
<dbReference type="RefSeq" id="WP_000611604.1">
    <property type="nucleotide sequence ID" value="NC_013941.1"/>
</dbReference>
<dbReference type="PDB" id="2GMS">
    <property type="method" value="X-ray"/>
    <property type="resolution" value="1.80 A"/>
    <property type="chains" value="A/B=1-388"/>
</dbReference>
<dbReference type="PDB" id="2GMU">
    <property type="method" value="X-ray"/>
    <property type="resolution" value="1.90 A"/>
    <property type="chains" value="A/B=1-388"/>
</dbReference>
<dbReference type="PDB" id="2R0T">
    <property type="method" value="X-ray"/>
    <property type="resolution" value="1.90 A"/>
    <property type="chains" value="A/B=1-388"/>
</dbReference>
<dbReference type="PDB" id="3B8X">
    <property type="method" value="X-ray"/>
    <property type="resolution" value="1.70 A"/>
    <property type="chains" value="A/B=1-388"/>
</dbReference>
<dbReference type="PDBsum" id="2GMS"/>
<dbReference type="PDBsum" id="2GMU"/>
<dbReference type="PDBsum" id="2R0T"/>
<dbReference type="PDBsum" id="3B8X"/>
<dbReference type="SMR" id="D3QY10"/>
<dbReference type="KEGG" id="eok:G2583_2551"/>
<dbReference type="HOGENOM" id="CLU_033332_5_0_6"/>
<dbReference type="UniPathway" id="UPA01070"/>
<dbReference type="GO" id="GO:0005886">
    <property type="term" value="C:plasma membrane"/>
    <property type="evidence" value="ECO:0007669"/>
    <property type="project" value="UniProtKB-SubCell"/>
</dbReference>
<dbReference type="GO" id="GO:0016829">
    <property type="term" value="F:lyase activity"/>
    <property type="evidence" value="ECO:0007669"/>
    <property type="project" value="UniProtKB-KW"/>
</dbReference>
<dbReference type="GO" id="GO:0030170">
    <property type="term" value="F:pyridoxal phosphate binding"/>
    <property type="evidence" value="ECO:0007669"/>
    <property type="project" value="TreeGrafter"/>
</dbReference>
<dbReference type="GO" id="GO:0008483">
    <property type="term" value="F:transaminase activity"/>
    <property type="evidence" value="ECO:0007669"/>
    <property type="project" value="TreeGrafter"/>
</dbReference>
<dbReference type="GO" id="GO:0000271">
    <property type="term" value="P:polysaccharide biosynthetic process"/>
    <property type="evidence" value="ECO:0007669"/>
    <property type="project" value="TreeGrafter"/>
</dbReference>
<dbReference type="CDD" id="cd00616">
    <property type="entry name" value="AHBA_syn"/>
    <property type="match status" value="1"/>
</dbReference>
<dbReference type="Gene3D" id="3.90.1150.10">
    <property type="entry name" value="Aspartate Aminotransferase, domain 1"/>
    <property type="match status" value="1"/>
</dbReference>
<dbReference type="Gene3D" id="3.40.640.10">
    <property type="entry name" value="Type I PLP-dependent aspartate aminotransferase-like (Major domain)"/>
    <property type="match status" value="1"/>
</dbReference>
<dbReference type="InterPro" id="IPR000653">
    <property type="entry name" value="DegT/StrS_aminotransferase"/>
</dbReference>
<dbReference type="InterPro" id="IPR015424">
    <property type="entry name" value="PyrdxlP-dep_Trfase"/>
</dbReference>
<dbReference type="InterPro" id="IPR015421">
    <property type="entry name" value="PyrdxlP-dep_Trfase_major"/>
</dbReference>
<dbReference type="InterPro" id="IPR015422">
    <property type="entry name" value="PyrdxlP-dep_Trfase_small"/>
</dbReference>
<dbReference type="PANTHER" id="PTHR30244:SF34">
    <property type="entry name" value="DTDP-4-AMINO-4,6-DIDEOXYGALACTOSE TRANSAMINASE"/>
    <property type="match status" value="1"/>
</dbReference>
<dbReference type="PANTHER" id="PTHR30244">
    <property type="entry name" value="TRANSAMINASE"/>
    <property type="match status" value="1"/>
</dbReference>
<dbReference type="Pfam" id="PF01041">
    <property type="entry name" value="DegT_DnrJ_EryC1"/>
    <property type="match status" value="1"/>
</dbReference>
<dbReference type="PIRSF" id="PIRSF000390">
    <property type="entry name" value="PLP_StrS"/>
    <property type="match status" value="1"/>
</dbReference>
<dbReference type="SUPFAM" id="SSF53383">
    <property type="entry name" value="PLP-dependent transferases"/>
    <property type="match status" value="1"/>
</dbReference>
<proteinExistence type="evidence at protein level"/>
<gene>
    <name evidence="5" type="primary">colD</name>
    <name evidence="10" type="synonym">wbdK</name>
    <name evidence="10" type="ordered locus">G2583_2551</name>
</gene>
<protein>
    <recommendedName>
        <fullName evidence="5">GDP-4-keto-6-deoxy-D-mannose 3-dehydratase</fullName>
        <ecNumber evidence="3 4">4.2.1.168</ecNumber>
    </recommendedName>
</protein>
<comment type="function">
    <text evidence="4">Involved in the biosynthesis of L-colitose, a 3,6-dideoxyhexose present in the O-antigen region of lipopolysaccharides (LPS), where it serves as an antigenic determinant and is vital for bacterial defense and survival. Catalyzes the removal of the C3'-hydroxyl group from GDP-4-keto-6-deoxy-D-mannose via a combined transamination-deoxygenation reaction. The catalysis is initiated by a transamination step in which pyridoxal 5'-phosphate (PLP) is converted to pyridoxamine 5'-phosphate (PMP) in the presence of L-glutamate. This coenzyme then forms a Schiff base with GDP-4-keto-6-deoxy-D-mannose and the resulting adduct undergoes a PMP-mediated beta-dehydration reaction to give a sugar enamine intermediate, which after tautomerization and hydrolysis to release ammonia yields GDP-4-keto-3,6-dideoxy-D-mannose as a product. In vitro, is able to catalyze the formation of GDP-4-keto-3,6-dideoxymannose using GDP-perosamine rather than GDP-4-keto-6-deoxymannose as a substrate, with no need of glutamate.</text>
</comment>
<comment type="catalytic activity">
    <reaction evidence="3 4">
        <text>GDP-4-dehydro-alpha-D-rhamnose + L-glutamate = GDP-4-dehydro-3,6-dideoxy-alpha-D-mannose + 2-oxoglutarate + NH4(+)</text>
        <dbReference type="Rhea" id="RHEA:49488"/>
        <dbReference type="ChEBI" id="CHEBI:16810"/>
        <dbReference type="ChEBI" id="CHEBI:28938"/>
        <dbReference type="ChEBI" id="CHEBI:29985"/>
        <dbReference type="ChEBI" id="CHEBI:57964"/>
        <dbReference type="ChEBI" id="CHEBI:73931"/>
        <dbReference type="EC" id="4.2.1.168"/>
    </reaction>
</comment>
<comment type="cofactor">
    <cofactor evidence="4">
        <name>pyridoxal 5'-phosphate</name>
        <dbReference type="ChEBI" id="CHEBI:597326"/>
    </cofactor>
</comment>
<comment type="pathway">
    <text evidence="9">Nucleotide-sugar metabolism; GDP-L-colitose biosynthesis.</text>
</comment>
<comment type="subunit">
    <text evidence="2">Homodimer.</text>
</comment>
<comment type="subcellular location">
    <subcellularLocation>
        <location evidence="1">Cell membrane</location>
        <topology evidence="1">Single-pass membrane protein</topology>
    </subcellularLocation>
</comment>
<comment type="similarity">
    <text evidence="6">Belongs to the DegT/DnrJ/EryC1 family.</text>
</comment>
<name>COLD_ECOCB</name>
<feature type="chain" id="PRO_0000439279" description="GDP-4-keto-6-deoxy-D-mannose 3-dehydratase">
    <location>
        <begin position="1"/>
        <end position="388"/>
    </location>
</feature>
<feature type="transmembrane region" description="Helical" evidence="1">
    <location>
        <begin position="49"/>
        <end position="69"/>
    </location>
</feature>
<feature type="active site" description="Proton donor/acceptor" evidence="7 9">
    <location>
        <position position="188"/>
    </location>
</feature>
<feature type="binding site" evidence="9 13">
    <location>
        <begin position="26"/>
        <end position="29"/>
    </location>
    <ligand>
        <name>GDP-4-dehydro-alpha-D-rhamnose</name>
        <dbReference type="ChEBI" id="CHEBI:57964"/>
        <note>ligand shared between dimeric partners</note>
    </ligand>
</feature>
<feature type="binding site" description="in other chain" evidence="2 8 9 11">
    <location>
        <begin position="56"/>
        <end position="57"/>
    </location>
    <ligand>
        <name>pyridoxal 5'-phosphate</name>
        <dbReference type="ChEBI" id="CHEBI:597326"/>
        <note>ligand shared between dimeric partners</note>
    </ligand>
</feature>
<feature type="binding site" description="in other chain" evidence="2 9 11">
    <location>
        <position position="88"/>
    </location>
    <ligand>
        <name>pyridoxal 5'-phosphate</name>
        <dbReference type="ChEBI" id="CHEBI:597326"/>
        <note>ligand shared between dimeric partners</note>
    </ligand>
</feature>
<feature type="binding site" description="in other chain" evidence="2 9 11">
    <location>
        <position position="162"/>
    </location>
    <ligand>
        <name>pyridoxal 5'-phosphate</name>
        <dbReference type="ChEBI" id="CHEBI:597326"/>
        <note>ligand shared between dimeric partners</note>
    </ligand>
</feature>
<feature type="binding site" description="in other chain" evidence="2 8 9 11">
    <location>
        <position position="183"/>
    </location>
    <ligand>
        <name>pyridoxal 5'-phosphate</name>
        <dbReference type="ChEBI" id="CHEBI:597326"/>
        <note>ligand shared between dimeric partners</note>
    </ligand>
</feature>
<feature type="binding site" evidence="7 8 12">
    <location>
        <position position="215"/>
    </location>
    <ligand>
        <name>L-glutamate</name>
        <dbReference type="ChEBI" id="CHEBI:29985"/>
        <note>ligand shared between dimeric partners</note>
    </ligand>
</feature>
<feature type="binding site" evidence="9 13">
    <location>
        <position position="219"/>
    </location>
    <ligand>
        <name>GDP-4-dehydro-alpha-D-rhamnose</name>
        <dbReference type="ChEBI" id="CHEBI:57964"/>
        <note>ligand shared between dimeric partners</note>
    </ligand>
</feature>
<feature type="binding site" evidence="2 8 9 11">
    <location>
        <position position="248"/>
    </location>
    <ligand>
        <name>pyridoxal 5'-phosphate</name>
        <dbReference type="ChEBI" id="CHEBI:597326"/>
        <note>ligand shared between dimeric partners</note>
    </ligand>
</feature>
<feature type="binding site" evidence="7 8 12">
    <location>
        <position position="250"/>
    </location>
    <ligand>
        <name>L-glutamate</name>
        <dbReference type="ChEBI" id="CHEBI:29985"/>
        <note>ligand shared between dimeric partners</note>
    </ligand>
</feature>
<feature type="binding site" description="in other chain" evidence="9 13">
    <location>
        <position position="329"/>
    </location>
    <ligand>
        <name>GDP-4-dehydro-alpha-D-rhamnose</name>
        <dbReference type="ChEBI" id="CHEBI:57964"/>
        <note>ligand shared between dimeric partners</note>
    </ligand>
</feature>
<feature type="mutagenesis site" description="Loss of GDP-sugar dehydration activity." evidence="3 4">
    <original>H</original>
    <variation>K</variation>
    <variation>N</variation>
    <location>
        <position position="188"/>
    </location>
</feature>
<reference key="1">
    <citation type="journal article" date="2010" name="PLoS ONE">
        <title>Derivation of Escherichia coli O157:H7 from its O55:H7 precursor.</title>
        <authorList>
            <person name="Zhou Z."/>
            <person name="Li X."/>
            <person name="Liu B."/>
            <person name="Beutin L."/>
            <person name="Xu J."/>
            <person name="Ren Y."/>
            <person name="Feng L."/>
            <person name="Lan R."/>
            <person name="Reeves P.R."/>
            <person name="Wang L."/>
        </authorList>
    </citation>
    <scope>NUCLEOTIDE SEQUENCE [LARGE SCALE GENOMIC DNA]</scope>
    <source>
        <strain>CB9615 / EPEC</strain>
    </source>
</reference>
<reference key="2">
    <citation type="journal article" date="2006" name="Protein Sci.">
        <title>The structure of GDP-4-keto-6-deoxy-D-mannose-3-dehydratase: a unique coenzyme B6-dependent enzyme.</title>
        <authorList>
            <person name="Cook P.D."/>
            <person name="Thoden J.B."/>
            <person name="Holden H.M."/>
        </authorList>
    </citation>
    <scope>X-RAY CRYSTALLOGRAPHY (1.80 ANGSTROMS) IN COMPLEXES WITH HYDRATED FORM OF PLP AND A PLP-GLUTAMATE KETIMINE INTERMEDIATE</scope>
    <scope>SUBUNIT</scope>
    <scope>REACTION MECHANISM</scope>
    <scope>ACTIVE SITE</scope>
    <source>
        <strain>5a</strain>
    </source>
</reference>
<reference key="3">
    <citation type="journal article" date="2007" name="Biochemistry">
        <title>A structural study of GDP-4-keto-6-deoxy-D-mannose-3-dehydratase: caught in the act of geminal diamine formation.</title>
        <authorList>
            <person name="Cook P.D."/>
            <person name="Holden H.M."/>
        </authorList>
    </citation>
    <scope>X-RAY CRYSTALLOGRAPHY (1.90 ANGSTROMS) OF MUTANT LYS-188 IN COMPLEX WITH A PLP-GLUTAMATE GEMINAL DIAMINE INTERMEDIATE</scope>
    <scope>CATALYTIC ACTIVITY</scope>
    <scope>MUTAGENESIS OF HIS-188</scope>
    <source>
        <strain>5a</strain>
    </source>
</reference>
<reference key="4">
    <citation type="journal article" date="2008" name="J. Biol. Chem.">
        <title>GDP-4-keto-6-deoxy-D-mannose 3-dehydratase, accommodating a sugar substrate in the active site.</title>
        <authorList>
            <person name="Cook P.D."/>
            <person name="Holden H.M."/>
        </authorList>
    </citation>
    <scope>X-RAY CRYSTALLOGRAPHY (1.70 ANGSTROMS) OF MUTANT ASN-188 IN COMPLEX WITH GDP-PEROSAMINE COVALENTLY LINKED TO PLP (EXTERNAL ALDIMINE)</scope>
    <scope>FUNCTION</scope>
    <scope>CATALYTIC ACTIVITY</scope>
    <scope>COFACTOR</scope>
    <scope>SUBSTRATE SPECIFICITY</scope>
    <scope>PATHWAY</scope>
    <scope>MUTAGENESIS OF HIS-188</scope>
    <scope>REACTION MECHANISM</scope>
    <scope>ACTIVE SITE</scope>
    <source>
        <strain>5a</strain>
    </source>
</reference>
<accession>D3QY10</accession>
<evidence type="ECO:0000255" key="1"/>
<evidence type="ECO:0000269" key="2">
    <source>
    </source>
</evidence>
<evidence type="ECO:0000269" key="3">
    <source>
    </source>
</evidence>
<evidence type="ECO:0000269" key="4">
    <source>
    </source>
</evidence>
<evidence type="ECO:0000303" key="5">
    <source>
    </source>
</evidence>
<evidence type="ECO:0000305" key="6"/>
<evidence type="ECO:0000305" key="7">
    <source>
    </source>
</evidence>
<evidence type="ECO:0000305" key="8">
    <source>
    </source>
</evidence>
<evidence type="ECO:0000305" key="9">
    <source>
    </source>
</evidence>
<evidence type="ECO:0000312" key="10">
    <source>
        <dbReference type="EMBL" id="ADD57102.1"/>
    </source>
</evidence>
<evidence type="ECO:0007744" key="11">
    <source>
        <dbReference type="PDB" id="2GMS"/>
    </source>
</evidence>
<evidence type="ECO:0007744" key="12">
    <source>
        <dbReference type="PDB" id="2GMU"/>
    </source>
</evidence>
<evidence type="ECO:0007744" key="13">
    <source>
        <dbReference type="PDB" id="3B8X"/>
    </source>
</evidence>